<accession>Q7MIE3</accession>
<gene>
    <name type="ordered locus">VV2574</name>
</gene>
<protein>
    <recommendedName>
        <fullName evidence="1">UPF0253 protein VV2574</fullName>
    </recommendedName>
</protein>
<feature type="chain" id="PRO_0000215549" description="UPF0253 protein VV2574">
    <location>
        <begin position="1"/>
        <end position="67"/>
    </location>
</feature>
<reference key="1">
    <citation type="journal article" date="2003" name="Genome Res.">
        <title>Comparative genome analysis of Vibrio vulnificus, a marine pathogen.</title>
        <authorList>
            <person name="Chen C.-Y."/>
            <person name="Wu K.-M."/>
            <person name="Chang Y.-C."/>
            <person name="Chang C.-H."/>
            <person name="Tsai H.-C."/>
            <person name="Liao T.-L."/>
            <person name="Liu Y.-M."/>
            <person name="Chen H.-J."/>
            <person name="Shen A.B.-T."/>
            <person name="Li J.-C."/>
            <person name="Su T.-L."/>
            <person name="Shao C.-P."/>
            <person name="Lee C.-T."/>
            <person name="Hor L.-I."/>
            <person name="Tsai S.-F."/>
        </authorList>
    </citation>
    <scope>NUCLEOTIDE SEQUENCE [LARGE SCALE GENOMIC DNA]</scope>
    <source>
        <strain>YJ016</strain>
    </source>
</reference>
<name>Y2574_VIBVY</name>
<organism>
    <name type="scientific">Vibrio vulnificus (strain YJ016)</name>
    <dbReference type="NCBI Taxonomy" id="196600"/>
    <lineage>
        <taxon>Bacteria</taxon>
        <taxon>Pseudomonadati</taxon>
        <taxon>Pseudomonadota</taxon>
        <taxon>Gammaproteobacteria</taxon>
        <taxon>Vibrionales</taxon>
        <taxon>Vibrionaceae</taxon>
        <taxon>Vibrio</taxon>
    </lineage>
</organism>
<dbReference type="EMBL" id="BA000037">
    <property type="protein sequence ID" value="BAC95338.1"/>
    <property type="molecule type" value="Genomic_DNA"/>
</dbReference>
<dbReference type="RefSeq" id="WP_011079742.1">
    <property type="nucleotide sequence ID" value="NC_005139.1"/>
</dbReference>
<dbReference type="SMR" id="Q7MIE3"/>
<dbReference type="STRING" id="672.VV93_v1c22920"/>
<dbReference type="KEGG" id="vvy:VV2574"/>
<dbReference type="eggNOG" id="ENOG5032Z3X">
    <property type="taxonomic scope" value="Bacteria"/>
</dbReference>
<dbReference type="HOGENOM" id="CLU_190008_0_0_6"/>
<dbReference type="Proteomes" id="UP000002675">
    <property type="component" value="Chromosome I"/>
</dbReference>
<dbReference type="HAMAP" id="MF_01064">
    <property type="entry name" value="UPF0253"/>
    <property type="match status" value="1"/>
</dbReference>
<dbReference type="InterPro" id="IPR009624">
    <property type="entry name" value="UPF0253"/>
</dbReference>
<dbReference type="NCBIfam" id="NF003436">
    <property type="entry name" value="PRK04964.1"/>
    <property type="match status" value="1"/>
</dbReference>
<dbReference type="Pfam" id="PF06786">
    <property type="entry name" value="UPF0253"/>
    <property type="match status" value="1"/>
</dbReference>
<evidence type="ECO:0000255" key="1">
    <source>
        <dbReference type="HAMAP-Rule" id="MF_01064"/>
    </source>
</evidence>
<sequence length="67" mass="7226">MQVYGCCELVRELYAQIGSGDQGYIPQAISCAVKALNDIAADESLPKETREKAAFAAANLLISDFED</sequence>
<proteinExistence type="inferred from homology"/>
<comment type="similarity">
    <text evidence="1">Belongs to the UPF0253 family.</text>
</comment>